<organism>
    <name type="scientific">Mycobacterium tuberculosis (strain CDC 1551 / Oshkosh)</name>
    <dbReference type="NCBI Taxonomy" id="83331"/>
    <lineage>
        <taxon>Bacteria</taxon>
        <taxon>Bacillati</taxon>
        <taxon>Actinomycetota</taxon>
        <taxon>Actinomycetes</taxon>
        <taxon>Mycobacteriales</taxon>
        <taxon>Mycobacteriaceae</taxon>
        <taxon>Mycobacterium</taxon>
        <taxon>Mycobacterium tuberculosis complex</taxon>
    </lineage>
</organism>
<keyword id="KW-0067">ATP-binding</keyword>
<keyword id="KW-0436">Ligase</keyword>
<keyword id="KW-0460">Magnesium</keyword>
<keyword id="KW-0479">Metal-binding</keyword>
<keyword id="KW-0547">Nucleotide-binding</keyword>
<keyword id="KW-1185">Reference proteome</keyword>
<keyword id="KW-0816">Tricarboxylic acid cycle</keyword>
<feature type="chain" id="PRO_0000428386" description="Succinate--CoA ligase [ADP-forming] subunit beta">
    <location>
        <begin position="1"/>
        <end position="387"/>
    </location>
</feature>
<feature type="domain" description="ATP-grasp" evidence="1">
    <location>
        <begin position="9"/>
        <end position="236"/>
    </location>
</feature>
<feature type="binding site" evidence="1">
    <location>
        <position position="45"/>
    </location>
    <ligand>
        <name>ATP</name>
        <dbReference type="ChEBI" id="CHEBI:30616"/>
    </ligand>
</feature>
<feature type="binding site" evidence="1">
    <location>
        <begin position="52"/>
        <end position="54"/>
    </location>
    <ligand>
        <name>ATP</name>
        <dbReference type="ChEBI" id="CHEBI:30616"/>
    </ligand>
</feature>
<feature type="binding site" evidence="1">
    <location>
        <position position="94"/>
    </location>
    <ligand>
        <name>ATP</name>
        <dbReference type="ChEBI" id="CHEBI:30616"/>
    </ligand>
</feature>
<feature type="binding site" evidence="1">
    <location>
        <position position="99"/>
    </location>
    <ligand>
        <name>ATP</name>
        <dbReference type="ChEBI" id="CHEBI:30616"/>
    </ligand>
</feature>
<feature type="binding site" evidence="1">
    <location>
        <position position="191"/>
    </location>
    <ligand>
        <name>Mg(2+)</name>
        <dbReference type="ChEBI" id="CHEBI:18420"/>
    </ligand>
</feature>
<feature type="binding site" evidence="1">
    <location>
        <position position="205"/>
    </location>
    <ligand>
        <name>Mg(2+)</name>
        <dbReference type="ChEBI" id="CHEBI:18420"/>
    </ligand>
</feature>
<feature type="binding site" evidence="1">
    <location>
        <position position="256"/>
    </location>
    <ligand>
        <name>substrate</name>
        <note>ligand shared with subunit alpha</note>
    </ligand>
</feature>
<feature type="binding site" evidence="1">
    <location>
        <begin position="318"/>
        <end position="320"/>
    </location>
    <ligand>
        <name>substrate</name>
        <note>ligand shared with subunit alpha</note>
    </ligand>
</feature>
<proteinExistence type="inferred from homology"/>
<evidence type="ECO:0000255" key="1">
    <source>
        <dbReference type="HAMAP-Rule" id="MF_00558"/>
    </source>
</evidence>
<sequence>MDLFEYQAKELFAKHNVPSTPGRVTDTAEGAKAIATEIGRPVMVKAQVKIGGRGKAGGVKYAATPQDAYEHAKNILGLDIKGHIVKKLLVAEASDIAEEYYLSFLLDRANRTYLAMCSVEGGMEIEEVAATKPERLAKVPVNAVKGVDLDFARSIAEQGHLPAEVLDTAAVTIAKLWELFVAEDATLVEVNPLVRTPDHKILALDAKITLDGNADFRQPGHAEFEDRAATDPLELKAKEHDLNYVKLDGQVGIIGNGAGLVMSTLDVVAYAGEKHGGVKPANFLDIGGGASAEVMAAGLDVVLGDQQVKSVFVNVFGGITSCDAVATGIVKALGMLGDEANKPLVVRLDGNNVEEGRRILTEANHPLVTLVATMDEAADKAAELASA</sequence>
<accession>P9WGC4</accession>
<accession>L0T6W4</accession>
<accession>P71559</accession>
<dbReference type="EC" id="6.2.1.5" evidence="1"/>
<dbReference type="EMBL" id="AE000516">
    <property type="protein sequence ID" value="AAK45226.1"/>
    <property type="molecule type" value="Genomic_DNA"/>
</dbReference>
<dbReference type="PIR" id="E70716">
    <property type="entry name" value="E70716"/>
</dbReference>
<dbReference type="RefSeq" id="WP_003898659.1">
    <property type="nucleotide sequence ID" value="NZ_KK341227.1"/>
</dbReference>
<dbReference type="SMR" id="P9WGC4"/>
<dbReference type="GeneID" id="45424920"/>
<dbReference type="KEGG" id="mtc:MT0978"/>
<dbReference type="PATRIC" id="fig|83331.31.peg.1049"/>
<dbReference type="HOGENOM" id="CLU_037430_0_2_11"/>
<dbReference type="UniPathway" id="UPA00223">
    <property type="reaction ID" value="UER00999"/>
</dbReference>
<dbReference type="Proteomes" id="UP000001020">
    <property type="component" value="Chromosome"/>
</dbReference>
<dbReference type="GO" id="GO:0005829">
    <property type="term" value="C:cytosol"/>
    <property type="evidence" value="ECO:0007669"/>
    <property type="project" value="TreeGrafter"/>
</dbReference>
<dbReference type="GO" id="GO:0042709">
    <property type="term" value="C:succinate-CoA ligase complex"/>
    <property type="evidence" value="ECO:0007669"/>
    <property type="project" value="TreeGrafter"/>
</dbReference>
<dbReference type="GO" id="GO:0005524">
    <property type="term" value="F:ATP binding"/>
    <property type="evidence" value="ECO:0007669"/>
    <property type="project" value="UniProtKB-UniRule"/>
</dbReference>
<dbReference type="GO" id="GO:0000287">
    <property type="term" value="F:magnesium ion binding"/>
    <property type="evidence" value="ECO:0007669"/>
    <property type="project" value="UniProtKB-UniRule"/>
</dbReference>
<dbReference type="GO" id="GO:0004775">
    <property type="term" value="F:succinate-CoA ligase (ADP-forming) activity"/>
    <property type="evidence" value="ECO:0007669"/>
    <property type="project" value="UniProtKB-UniRule"/>
</dbReference>
<dbReference type="GO" id="GO:0004776">
    <property type="term" value="F:succinate-CoA ligase (GDP-forming) activity"/>
    <property type="evidence" value="ECO:0007669"/>
    <property type="project" value="RHEA"/>
</dbReference>
<dbReference type="GO" id="GO:0006104">
    <property type="term" value="P:succinyl-CoA metabolic process"/>
    <property type="evidence" value="ECO:0007669"/>
    <property type="project" value="TreeGrafter"/>
</dbReference>
<dbReference type="GO" id="GO:0006099">
    <property type="term" value="P:tricarboxylic acid cycle"/>
    <property type="evidence" value="ECO:0007669"/>
    <property type="project" value="UniProtKB-UniRule"/>
</dbReference>
<dbReference type="FunFam" id="3.30.1490.20:FF:000014">
    <property type="entry name" value="Succinate--CoA ligase [ADP-forming] subunit beta"/>
    <property type="match status" value="1"/>
</dbReference>
<dbReference type="FunFam" id="3.30.470.20:FF:000002">
    <property type="entry name" value="Succinate--CoA ligase [ADP-forming] subunit beta"/>
    <property type="match status" value="1"/>
</dbReference>
<dbReference type="FunFam" id="3.40.50.261:FF:000007">
    <property type="entry name" value="Succinate--CoA ligase [ADP-forming] subunit beta"/>
    <property type="match status" value="1"/>
</dbReference>
<dbReference type="Gene3D" id="3.30.1490.20">
    <property type="entry name" value="ATP-grasp fold, A domain"/>
    <property type="match status" value="1"/>
</dbReference>
<dbReference type="Gene3D" id="3.30.470.20">
    <property type="entry name" value="ATP-grasp fold, B domain"/>
    <property type="match status" value="1"/>
</dbReference>
<dbReference type="Gene3D" id="3.40.50.261">
    <property type="entry name" value="Succinyl-CoA synthetase domains"/>
    <property type="match status" value="1"/>
</dbReference>
<dbReference type="HAMAP" id="MF_00558">
    <property type="entry name" value="Succ_CoA_beta"/>
    <property type="match status" value="1"/>
</dbReference>
<dbReference type="InterPro" id="IPR011761">
    <property type="entry name" value="ATP-grasp"/>
</dbReference>
<dbReference type="InterPro" id="IPR013650">
    <property type="entry name" value="ATP-grasp_succ-CoA_synth-type"/>
</dbReference>
<dbReference type="InterPro" id="IPR013815">
    <property type="entry name" value="ATP_grasp_subdomain_1"/>
</dbReference>
<dbReference type="InterPro" id="IPR017866">
    <property type="entry name" value="Succ-CoA_synthase_bsu_CS"/>
</dbReference>
<dbReference type="InterPro" id="IPR005811">
    <property type="entry name" value="SUCC_ACL_C"/>
</dbReference>
<dbReference type="InterPro" id="IPR005809">
    <property type="entry name" value="Succ_CoA_ligase-like_bsu"/>
</dbReference>
<dbReference type="InterPro" id="IPR016102">
    <property type="entry name" value="Succinyl-CoA_synth-like"/>
</dbReference>
<dbReference type="NCBIfam" id="NF001913">
    <property type="entry name" value="PRK00696.1"/>
    <property type="match status" value="1"/>
</dbReference>
<dbReference type="NCBIfam" id="TIGR01016">
    <property type="entry name" value="sucCoAbeta"/>
    <property type="match status" value="1"/>
</dbReference>
<dbReference type="PANTHER" id="PTHR11815:SF10">
    <property type="entry name" value="SUCCINATE--COA LIGASE [GDP-FORMING] SUBUNIT BETA, MITOCHONDRIAL"/>
    <property type="match status" value="1"/>
</dbReference>
<dbReference type="PANTHER" id="PTHR11815">
    <property type="entry name" value="SUCCINYL-COA SYNTHETASE BETA CHAIN"/>
    <property type="match status" value="1"/>
</dbReference>
<dbReference type="Pfam" id="PF08442">
    <property type="entry name" value="ATP-grasp_2"/>
    <property type="match status" value="1"/>
</dbReference>
<dbReference type="Pfam" id="PF00549">
    <property type="entry name" value="Ligase_CoA"/>
    <property type="match status" value="1"/>
</dbReference>
<dbReference type="PIRSF" id="PIRSF001554">
    <property type="entry name" value="SucCS_beta"/>
    <property type="match status" value="1"/>
</dbReference>
<dbReference type="SUPFAM" id="SSF56059">
    <property type="entry name" value="Glutathione synthetase ATP-binding domain-like"/>
    <property type="match status" value="1"/>
</dbReference>
<dbReference type="SUPFAM" id="SSF52210">
    <property type="entry name" value="Succinyl-CoA synthetase domains"/>
    <property type="match status" value="1"/>
</dbReference>
<dbReference type="PROSITE" id="PS50975">
    <property type="entry name" value="ATP_GRASP"/>
    <property type="match status" value="1"/>
</dbReference>
<dbReference type="PROSITE" id="PS01217">
    <property type="entry name" value="SUCCINYL_COA_LIG_3"/>
    <property type="match status" value="1"/>
</dbReference>
<name>SUCC_MYCTO</name>
<comment type="function">
    <text evidence="1">Succinyl-CoA synthetase functions in the citric acid cycle (TCA), coupling the hydrolysis of succinyl-CoA to the synthesis of either ATP or GTP and thus represents the only step of substrate-level phosphorylation in the TCA. The beta subunit provides nucleotide specificity of the enzyme and binds the substrate succinate, while the binding sites for coenzyme A and phosphate are found in the alpha subunit.</text>
</comment>
<comment type="catalytic activity">
    <reaction evidence="1">
        <text>succinate + ATP + CoA = succinyl-CoA + ADP + phosphate</text>
        <dbReference type="Rhea" id="RHEA:17661"/>
        <dbReference type="ChEBI" id="CHEBI:30031"/>
        <dbReference type="ChEBI" id="CHEBI:30616"/>
        <dbReference type="ChEBI" id="CHEBI:43474"/>
        <dbReference type="ChEBI" id="CHEBI:57287"/>
        <dbReference type="ChEBI" id="CHEBI:57292"/>
        <dbReference type="ChEBI" id="CHEBI:456216"/>
        <dbReference type="EC" id="6.2.1.5"/>
    </reaction>
    <physiologicalReaction direction="right-to-left" evidence="1">
        <dbReference type="Rhea" id="RHEA:17663"/>
    </physiologicalReaction>
</comment>
<comment type="catalytic activity">
    <reaction evidence="1">
        <text>GTP + succinate + CoA = succinyl-CoA + GDP + phosphate</text>
        <dbReference type="Rhea" id="RHEA:22120"/>
        <dbReference type="ChEBI" id="CHEBI:30031"/>
        <dbReference type="ChEBI" id="CHEBI:37565"/>
        <dbReference type="ChEBI" id="CHEBI:43474"/>
        <dbReference type="ChEBI" id="CHEBI:57287"/>
        <dbReference type="ChEBI" id="CHEBI:57292"/>
        <dbReference type="ChEBI" id="CHEBI:58189"/>
    </reaction>
    <physiologicalReaction direction="right-to-left" evidence="1">
        <dbReference type="Rhea" id="RHEA:22122"/>
    </physiologicalReaction>
</comment>
<comment type="cofactor">
    <cofactor evidence="1">
        <name>Mg(2+)</name>
        <dbReference type="ChEBI" id="CHEBI:18420"/>
    </cofactor>
    <text evidence="1">Binds 1 Mg(2+) ion per subunit.</text>
</comment>
<comment type="pathway">
    <text evidence="1">Carbohydrate metabolism; tricarboxylic acid cycle; succinate from succinyl-CoA (ligase route): step 1/1.</text>
</comment>
<comment type="subunit">
    <text evidence="1">Heterotetramer of two alpha and two beta subunits.</text>
</comment>
<comment type="similarity">
    <text evidence="1">Belongs to the succinate/malate CoA ligase beta subunit family.</text>
</comment>
<gene>
    <name evidence="1" type="primary">sucC</name>
    <name type="ordered locus">MT0978</name>
</gene>
<protein>
    <recommendedName>
        <fullName evidence="1">Succinate--CoA ligase [ADP-forming] subunit beta</fullName>
        <ecNumber evidence="1">6.2.1.5</ecNumber>
    </recommendedName>
    <alternativeName>
        <fullName evidence="1">Succinyl-CoA synthetase subunit beta</fullName>
        <shortName evidence="1">SCS-beta</shortName>
    </alternativeName>
</protein>
<reference key="1">
    <citation type="journal article" date="2002" name="J. Bacteriol.">
        <title>Whole-genome comparison of Mycobacterium tuberculosis clinical and laboratory strains.</title>
        <authorList>
            <person name="Fleischmann R.D."/>
            <person name="Alland D."/>
            <person name="Eisen J.A."/>
            <person name="Carpenter L."/>
            <person name="White O."/>
            <person name="Peterson J.D."/>
            <person name="DeBoy R.T."/>
            <person name="Dodson R.J."/>
            <person name="Gwinn M.L."/>
            <person name="Haft D.H."/>
            <person name="Hickey E.K."/>
            <person name="Kolonay J.F."/>
            <person name="Nelson W.C."/>
            <person name="Umayam L.A."/>
            <person name="Ermolaeva M.D."/>
            <person name="Salzberg S.L."/>
            <person name="Delcher A."/>
            <person name="Utterback T.R."/>
            <person name="Weidman J.F."/>
            <person name="Khouri H.M."/>
            <person name="Gill J."/>
            <person name="Mikula A."/>
            <person name="Bishai W."/>
            <person name="Jacobs W.R. Jr."/>
            <person name="Venter J.C."/>
            <person name="Fraser C.M."/>
        </authorList>
    </citation>
    <scope>NUCLEOTIDE SEQUENCE [LARGE SCALE GENOMIC DNA]</scope>
    <source>
        <strain>CDC 1551 / Oshkosh</strain>
    </source>
</reference>